<organism>
    <name type="scientific">Homo sapiens</name>
    <name type="common">Human</name>
    <dbReference type="NCBI Taxonomy" id="9606"/>
    <lineage>
        <taxon>Eukaryota</taxon>
        <taxon>Metazoa</taxon>
        <taxon>Chordata</taxon>
        <taxon>Craniata</taxon>
        <taxon>Vertebrata</taxon>
        <taxon>Euteleostomi</taxon>
        <taxon>Mammalia</taxon>
        <taxon>Eutheria</taxon>
        <taxon>Euarchontoglires</taxon>
        <taxon>Primates</taxon>
        <taxon>Haplorrhini</taxon>
        <taxon>Catarrhini</taxon>
        <taxon>Hominidae</taxon>
        <taxon>Homo</taxon>
    </lineage>
</organism>
<gene>
    <name evidence="9 14" type="primary">RPL10L</name>
</gene>
<accession>Q96L21</accession>
<accession>Q8IUD1</accession>
<feature type="chain" id="PRO_0000147106" description="Ribosomal protein uL16-like">
    <location>
        <begin position="1"/>
        <end position="214"/>
    </location>
</feature>
<feature type="sequence variant" id="VAR_085860" description="In SPGF63; reduced protein expression; dbSNP:rs1883886214." evidence="7">
    <original>H</original>
    <variation>P</variation>
    <location>
        <position position="86"/>
    </location>
</feature>
<evidence type="ECO:0000250" key="1">
    <source>
        <dbReference type="UniProtKB" id="P86048"/>
    </source>
</evidence>
<evidence type="ECO:0000269" key="2">
    <source>
    </source>
</evidence>
<evidence type="ECO:0000269" key="3">
    <source>
    </source>
</evidence>
<evidence type="ECO:0000269" key="4">
    <source>
    </source>
</evidence>
<evidence type="ECO:0000269" key="5">
    <source>
    </source>
</evidence>
<evidence type="ECO:0000269" key="6">
    <source>
    </source>
</evidence>
<evidence type="ECO:0000269" key="7">
    <source>
    </source>
</evidence>
<evidence type="ECO:0000269" key="8">
    <source>
    </source>
</evidence>
<evidence type="ECO:0000303" key="9">
    <source>
    </source>
</evidence>
<evidence type="ECO:0000305" key="10"/>
<evidence type="ECO:0000305" key="11">
    <source>
    </source>
</evidence>
<evidence type="ECO:0000305" key="12">
    <source>
    </source>
</evidence>
<evidence type="ECO:0000305" key="13">
    <source>
    </source>
</evidence>
<evidence type="ECO:0000312" key="14">
    <source>
        <dbReference type="HGNC" id="HGNC:17976"/>
    </source>
</evidence>
<evidence type="ECO:0007744" key="15">
    <source>
        <dbReference type="PDB" id="4UG0"/>
    </source>
</evidence>
<evidence type="ECO:0007744" key="16">
    <source>
        <dbReference type="PDB" id="6LQM"/>
    </source>
</evidence>
<proteinExistence type="evidence at protein level"/>
<sequence>MGRRPARCYRYCKNKPYPKSRFCRGVPDAKIRIFDLGRKKAKVDEFPLGGHMVSDEYEQLSSEALEAARICANKYMVKSCGRDGFHMRVRLHPFHVIRINKMLSCAGADRLQTGMRGAFGKPQGTVARVHIGQVIMSIRTKLQNEEHVIEALRRAKFKFPGRQKIHISKKWGFTKFNADEFEDMVAKKCLIPDGCGVKYVPSHGPLDKWRVLHS</sequence>
<name>RL10L_HUMAN</name>
<comment type="function">
    <text evidence="1 2 4 5 8">Testis-specific component of the ribosome, which is required for the transition from prophase to metaphase in male meiosis I (By similarity). Compensates for the inactivated X-linked RPL10 paralog during spermatogenesis (PubMed:12490704). The ribosome is a large ribonucleoprotein complex responsible for the synthesis of proteins in the cell (PubMed:23636399, PubMed:25901680, PubMed:32669547). The male germ cell-specific ribosome displays a ribosomal polypeptide exit tunnel of distinct size and charge states compared with the classical ribosome (By similarity). It is responsible for regulating the biosynthesis and folding of a subset of male germ-cell-specific proteins that are essential for the formation of sperm (By similarity).</text>
</comment>
<comment type="subunit">
    <text evidence="1 4 5 8">Component of a male germ cell-specific 60S large ribosomal subunit (LSU), which contains RPL10L and RPL39L, instead of RPL10 and RPL39 paralogs (PubMed:23636399, PubMed:25901680, PubMed:32669547). The composition of the rest of the complex is similar to classical ribosomes (By similarity).</text>
</comment>
<comment type="subcellular location">
    <subcellularLocation>
        <location evidence="11 12 13">Cytoplasm</location>
    </subcellularLocation>
</comment>
<comment type="tissue specificity">
    <text evidence="2 3 6">Almost testis-specific (PubMed:12490704, PubMed:19333399, PubMed:28502657). Also expressed in pre- and postmenopausal ovary (PubMed:19333399).</text>
</comment>
<comment type="disease" evidence="7">
    <disease id="DI-06208">
        <name>Spermatogenic failure 63</name>
        <acronym>SPGF63</acronym>
        <description>An autosomal recessive male infertility disorder characterized by severe oligozoospermia and reduced progressive sperm motility.</description>
        <dbReference type="MIM" id="619689"/>
    </disease>
    <text>The disease is caused by variants affecting the gene represented in this entry.</text>
</comment>
<comment type="miscellaneous">
    <text evidence="2">This gene has no introns in its coding regions, and therefore was most likely produced by retrotransposition of the original X-linked gene during evolution.</text>
</comment>
<comment type="similarity">
    <text evidence="10">Belongs to the universal ribosomal protein uL16 family.</text>
</comment>
<protein>
    <recommendedName>
        <fullName evidence="10">Ribosomal protein uL16-like</fullName>
    </recommendedName>
    <alternativeName>
        <fullName evidence="9">60S ribosomal protein L10-like</fullName>
    </alternativeName>
    <alternativeName>
        <fullName>Large ribosomal subunit protein uL16-like</fullName>
    </alternativeName>
</protein>
<reference key="1">
    <citation type="journal article" date="2002" name="Nucleic Acids Res.">
        <title>Functional second genes generated by retrotransposition of the X-linked ribosomal protein genes.</title>
        <authorList>
            <person name="Uechi T."/>
            <person name="Maeda N."/>
            <person name="Tanaka T."/>
            <person name="Kenmochi N."/>
        </authorList>
    </citation>
    <scope>NUCLEOTIDE SEQUENCE [MRNA]</scope>
    <scope>FUNCTION</scope>
    <scope>TISSUE SPECIFICITY</scope>
</reference>
<reference key="2">
    <citation type="journal article" date="2004" name="Genome Res.">
        <title>The status, quality, and expansion of the NIH full-length cDNA project: the Mammalian Gene Collection (MGC).</title>
        <authorList>
            <consortium name="The MGC Project Team"/>
        </authorList>
    </citation>
    <scope>NUCLEOTIDE SEQUENCE [LARGE SCALE MRNA]</scope>
    <source>
        <tissue>Testis</tissue>
    </source>
</reference>
<reference key="3">
    <citation type="journal article" date="2009" name="PLoS ONE">
        <title>Spermatogenesis associated retrogenes are expressed in the human ovary and ovarian cancers.</title>
        <authorList>
            <person name="Rohozinski J."/>
            <person name="Anderson M.L."/>
            <person name="Broaddus R.E."/>
            <person name="Edwards C.L."/>
            <person name="Bishop C.E."/>
        </authorList>
    </citation>
    <scope>TISSUE SPECIFICITY</scope>
</reference>
<reference key="4">
    <citation type="journal article" date="2017" name="Curr. Biol.">
        <title>RPL10L is required for male meiotic division by compensating for RPL10 during meiotic sex chromosome inactivation in mice.</title>
        <authorList>
            <person name="Jiang L."/>
            <person name="Li T."/>
            <person name="Zhang X."/>
            <person name="Zhang B."/>
            <person name="Yu C."/>
            <person name="Li Y."/>
            <person name="Fan S."/>
            <person name="Jiang X."/>
            <person name="Khan T."/>
            <person name="Hao Q."/>
            <person name="Xu P."/>
            <person name="Nadano D."/>
            <person name="Huleihel M."/>
            <person name="Lunenfeld E."/>
            <person name="Wang P.J."/>
            <person name="Zhang Y."/>
            <person name="Shi Q."/>
        </authorList>
    </citation>
    <scope>TISSUE SPECIFICITY</scope>
</reference>
<reference key="5">
    <citation type="journal article" date="2013" name="Nature">
        <title>Structures of the human and Drosophila 80S ribosome.</title>
        <authorList>
            <person name="Anger A.M."/>
            <person name="Armache J.P."/>
            <person name="Berninghausen O."/>
            <person name="Habeck M."/>
            <person name="Subklewe M."/>
            <person name="Wilson D.N."/>
            <person name="Beckmann R."/>
        </authorList>
    </citation>
    <scope>STRUCTURE BY ELECTRON MICROSCOPY (5.0 ANGSTROMS) OF 80S RIBOSOME</scope>
    <scope>FUNCTION</scope>
    <scope>SUBCELLULAR LOCATION</scope>
    <scope>SUBUNIT</scope>
</reference>
<reference evidence="15" key="6">
    <citation type="journal article" date="2015" name="Nature">
        <title>Structure of the human 80S ribosome.</title>
        <authorList>
            <person name="Khatter H."/>
            <person name="Myasnikov A.G."/>
            <person name="Natchiar S.K."/>
            <person name="Klaholz B.P."/>
        </authorList>
    </citation>
    <scope>STRUCTURE BY ELECTRON MICROSCOPY (3.60 ANGSTROMS)</scope>
    <scope>FUNCTION</scope>
    <scope>SUBCELLULAR LOCATION</scope>
    <scope>SUBUNIT</scope>
</reference>
<reference evidence="16" key="7">
    <citation type="journal article" date="2020" name="Nat. Commun.">
        <title>Structural snapshots of human pre-60S ribosomal particles before and after nuclear export.</title>
        <authorList>
            <person name="Liang X."/>
            <person name="Zuo M.Q."/>
            <person name="Zhang Y."/>
            <person name="Li N."/>
            <person name="Ma C."/>
            <person name="Dong M.Q."/>
            <person name="Gao N."/>
        </authorList>
    </citation>
    <scope>STRUCTURE BY ELECTRON MICROSCOPY (3.09 ANGSTROMS)</scope>
    <scope>FUNCTION</scope>
    <scope>SUBUNIT</scope>
</reference>
<reference key="8">
    <citation type="journal article" date="2020" name="Fertil. Steril.">
        <title>A homozygous RPL10L missense mutation associated with male factor infertility and severe oligozoospermia.</title>
        <authorList>
            <person name="Tu C."/>
            <person name="Meng L."/>
            <person name="Nie H."/>
            <person name="Yuan S."/>
            <person name="Wang W."/>
            <person name="Du J."/>
            <person name="Lu G."/>
            <person name="Lin G."/>
            <person name="Tan Y.Q."/>
        </authorList>
    </citation>
    <scope>INVOLVEMENT IN SPGF63</scope>
    <scope>VARIANT SPGF63 PRO-86</scope>
</reference>
<dbReference type="EMBL" id="AB063605">
    <property type="protein sequence ID" value="BAC19833.1"/>
    <property type="molecule type" value="Genomic_DNA"/>
</dbReference>
<dbReference type="EMBL" id="AB063608">
    <property type="protein sequence ID" value="BAC19835.1"/>
    <property type="molecule type" value="mRNA"/>
</dbReference>
<dbReference type="EMBL" id="BC014310">
    <property type="protein sequence ID" value="AAH14310.1"/>
    <property type="molecule type" value="mRNA"/>
</dbReference>
<dbReference type="EMBL" id="BC066312">
    <property type="protein sequence ID" value="AAH66312.1"/>
    <property type="molecule type" value="mRNA"/>
</dbReference>
<dbReference type="CCDS" id="CCDS32071.1"/>
<dbReference type="RefSeq" id="NP_542784.1">
    <property type="nucleotide sequence ID" value="NM_080746.3"/>
</dbReference>
<dbReference type="PDB" id="4UG0">
    <property type="method" value="EM"/>
    <property type="chains" value="LI=1-214"/>
</dbReference>
<dbReference type="PDB" id="4V6X">
    <property type="method" value="EM"/>
    <property type="resolution" value="5.00 A"/>
    <property type="chains" value="CI=1-214"/>
</dbReference>
<dbReference type="PDB" id="5LKS">
    <property type="method" value="EM"/>
    <property type="resolution" value="3.60 A"/>
    <property type="chains" value="LI=1-214"/>
</dbReference>
<dbReference type="PDB" id="5T2C">
    <property type="method" value="EM"/>
    <property type="resolution" value="3.60 A"/>
    <property type="chains" value="p=1-214"/>
</dbReference>
<dbReference type="PDB" id="6IP5">
    <property type="method" value="EM"/>
    <property type="resolution" value="3.90 A"/>
    <property type="chains" value="2D=1-214"/>
</dbReference>
<dbReference type="PDB" id="6IP6">
    <property type="method" value="EM"/>
    <property type="resolution" value="4.50 A"/>
    <property type="chains" value="2D=1-214"/>
</dbReference>
<dbReference type="PDB" id="6IP8">
    <property type="method" value="EM"/>
    <property type="resolution" value="3.90 A"/>
    <property type="chains" value="2D=1-214"/>
</dbReference>
<dbReference type="PDB" id="6LQM">
    <property type="method" value="EM"/>
    <property type="resolution" value="3.09 A"/>
    <property type="chains" value="J=1-214"/>
</dbReference>
<dbReference type="PDB" id="6QZP">
    <property type="method" value="EM"/>
    <property type="resolution" value="2.90 A"/>
    <property type="chains" value="LI=2-214"/>
</dbReference>
<dbReference type="PDB" id="6XA1">
    <property type="method" value="EM"/>
    <property type="resolution" value="2.80 A"/>
    <property type="chains" value="LI=2-214"/>
</dbReference>
<dbReference type="PDB" id="6Y0G">
    <property type="method" value="EM"/>
    <property type="resolution" value="3.20 A"/>
    <property type="chains" value="LI=1-214"/>
</dbReference>
<dbReference type="PDB" id="6Y2L">
    <property type="method" value="EM"/>
    <property type="resolution" value="3.00 A"/>
    <property type="chains" value="LI=1-214"/>
</dbReference>
<dbReference type="PDB" id="6Y57">
    <property type="method" value="EM"/>
    <property type="resolution" value="3.50 A"/>
    <property type="chains" value="LI=1-214"/>
</dbReference>
<dbReference type="PDB" id="6Y6X">
    <property type="method" value="EM"/>
    <property type="resolution" value="2.80 A"/>
    <property type="chains" value="LI=2-214"/>
</dbReference>
<dbReference type="PDB" id="6Z6L">
    <property type="method" value="EM"/>
    <property type="resolution" value="3.00 A"/>
    <property type="chains" value="LI=1-214"/>
</dbReference>
<dbReference type="PDB" id="6Z6M">
    <property type="method" value="EM"/>
    <property type="resolution" value="3.10 A"/>
    <property type="chains" value="LI=1-214"/>
</dbReference>
<dbReference type="PDB" id="6Z6N">
    <property type="method" value="EM"/>
    <property type="resolution" value="2.90 A"/>
    <property type="chains" value="LI=1-214"/>
</dbReference>
<dbReference type="PDB" id="6ZM7">
    <property type="method" value="EM"/>
    <property type="resolution" value="2.70 A"/>
    <property type="chains" value="LI=1-214"/>
</dbReference>
<dbReference type="PDB" id="6ZME">
    <property type="method" value="EM"/>
    <property type="resolution" value="3.00 A"/>
    <property type="chains" value="LI=1-214"/>
</dbReference>
<dbReference type="PDB" id="6ZMI">
    <property type="method" value="EM"/>
    <property type="resolution" value="2.60 A"/>
    <property type="chains" value="LI=1-214"/>
</dbReference>
<dbReference type="PDB" id="6ZMO">
    <property type="method" value="EM"/>
    <property type="resolution" value="3.10 A"/>
    <property type="chains" value="LI=1-214"/>
</dbReference>
<dbReference type="PDB" id="7BHP">
    <property type="method" value="EM"/>
    <property type="resolution" value="3.30 A"/>
    <property type="chains" value="LI=1-214"/>
</dbReference>
<dbReference type="PDB" id="7OW7">
    <property type="method" value="EM"/>
    <property type="resolution" value="2.20 A"/>
    <property type="chains" value="p=1-214"/>
</dbReference>
<dbReference type="PDB" id="7QVP">
    <property type="method" value="EM"/>
    <property type="resolution" value="3.00 A"/>
    <property type="chains" value="LI/MI=1-214"/>
</dbReference>
<dbReference type="PDB" id="8IFD">
    <property type="method" value="EM"/>
    <property type="resolution" value="2.59 A"/>
    <property type="chains" value="2D=1-214"/>
</dbReference>
<dbReference type="PDB" id="8IFE">
    <property type="method" value="EM"/>
    <property type="resolution" value="2.57 A"/>
    <property type="chains" value="2D=1-214"/>
</dbReference>
<dbReference type="PDB" id="8JDJ">
    <property type="method" value="EM"/>
    <property type="resolution" value="2.50 A"/>
    <property type="chains" value="O=1-214"/>
</dbReference>
<dbReference type="PDB" id="8JDK">
    <property type="method" value="EM"/>
    <property type="resolution" value="2.26 A"/>
    <property type="chains" value="O=1-214"/>
</dbReference>
<dbReference type="PDB" id="8JDL">
    <property type="method" value="EM"/>
    <property type="resolution" value="2.42 A"/>
    <property type="chains" value="O=1-214"/>
</dbReference>
<dbReference type="PDB" id="8JDM">
    <property type="method" value="EM"/>
    <property type="resolution" value="2.67 A"/>
    <property type="chains" value="O=1-214"/>
</dbReference>
<dbReference type="PDB" id="8OHD">
    <property type="method" value="EM"/>
    <property type="resolution" value="3.10 A"/>
    <property type="chains" value="LI=1-214"/>
</dbReference>
<dbReference type="PDB" id="8OJ0">
    <property type="method" value="EM"/>
    <property type="resolution" value="3.30 A"/>
    <property type="chains" value="LI=1-214"/>
</dbReference>
<dbReference type="PDB" id="8OJ5">
    <property type="method" value="EM"/>
    <property type="resolution" value="2.90 A"/>
    <property type="chains" value="LI=1-214"/>
</dbReference>
<dbReference type="PDB" id="8OJ8">
    <property type="method" value="EM"/>
    <property type="resolution" value="3.30 A"/>
    <property type="chains" value="LI=1-214"/>
</dbReference>
<dbReference type="PDB" id="8QOI">
    <property type="method" value="EM"/>
    <property type="resolution" value="1.90 A"/>
    <property type="chains" value="LI=1-214"/>
</dbReference>
<dbReference type="PDB" id="8QYX">
    <property type="method" value="EM"/>
    <property type="resolution" value="1.78 A"/>
    <property type="chains" value="D1=1-214"/>
</dbReference>
<dbReference type="PDB" id="8UKB">
    <property type="method" value="EM"/>
    <property type="resolution" value="3.05 A"/>
    <property type="chains" value="LI=2-214"/>
</dbReference>
<dbReference type="PDB" id="8XSX">
    <property type="method" value="EM"/>
    <property type="resolution" value="2.40 A"/>
    <property type="chains" value="LI=1-214"/>
</dbReference>
<dbReference type="PDB" id="8Y0W">
    <property type="method" value="EM"/>
    <property type="resolution" value="3.40 A"/>
    <property type="chains" value="LI=1-214"/>
</dbReference>
<dbReference type="PDB" id="8Y0X">
    <property type="method" value="EM"/>
    <property type="resolution" value="3.30 A"/>
    <property type="chains" value="LI=1-214"/>
</dbReference>
<dbReference type="PDB" id="9G8M">
    <property type="method" value="EM"/>
    <property type="resolution" value="3.30 A"/>
    <property type="chains" value="LI=1-214"/>
</dbReference>
<dbReference type="PDBsum" id="4UG0"/>
<dbReference type="PDBsum" id="4V6X"/>
<dbReference type="PDBsum" id="5LKS"/>
<dbReference type="PDBsum" id="5T2C"/>
<dbReference type="PDBsum" id="6IP5"/>
<dbReference type="PDBsum" id="6IP6"/>
<dbReference type="PDBsum" id="6IP8"/>
<dbReference type="PDBsum" id="6LQM"/>
<dbReference type="PDBsum" id="6QZP"/>
<dbReference type="PDBsum" id="6XA1"/>
<dbReference type="PDBsum" id="6Y0G"/>
<dbReference type="PDBsum" id="6Y2L"/>
<dbReference type="PDBsum" id="6Y57"/>
<dbReference type="PDBsum" id="6Y6X"/>
<dbReference type="PDBsum" id="6Z6L"/>
<dbReference type="PDBsum" id="6Z6M"/>
<dbReference type="PDBsum" id="6Z6N"/>
<dbReference type="PDBsum" id="6ZM7"/>
<dbReference type="PDBsum" id="6ZME"/>
<dbReference type="PDBsum" id="6ZMI"/>
<dbReference type="PDBsum" id="6ZMO"/>
<dbReference type="PDBsum" id="7BHP"/>
<dbReference type="PDBsum" id="7OW7"/>
<dbReference type="PDBsum" id="7QVP"/>
<dbReference type="PDBsum" id="8IFD"/>
<dbReference type="PDBsum" id="8IFE"/>
<dbReference type="PDBsum" id="8JDJ"/>
<dbReference type="PDBsum" id="8JDK"/>
<dbReference type="PDBsum" id="8JDL"/>
<dbReference type="PDBsum" id="8JDM"/>
<dbReference type="PDBsum" id="8OHD"/>
<dbReference type="PDBsum" id="8OJ0"/>
<dbReference type="PDBsum" id="8OJ5"/>
<dbReference type="PDBsum" id="8OJ8"/>
<dbReference type="PDBsum" id="8QOI"/>
<dbReference type="PDBsum" id="8QYX"/>
<dbReference type="PDBsum" id="8UKB"/>
<dbReference type="PDBsum" id="8XSX"/>
<dbReference type="PDBsum" id="8Y0W"/>
<dbReference type="PDBsum" id="8Y0X"/>
<dbReference type="PDBsum" id="9G8M"/>
<dbReference type="EMDB" id="EMD-0948"/>
<dbReference type="EMDB" id="EMD-10668"/>
<dbReference type="EMDB" id="EMD-10674"/>
<dbReference type="EMDB" id="EMD-10690"/>
<dbReference type="EMDB" id="EMD-10709"/>
<dbReference type="EMDB" id="EMD-11098"/>
<dbReference type="EMDB" id="EMD-11099"/>
<dbReference type="EMDB" id="EMD-11100"/>
<dbReference type="EMDB" id="EMD-11288"/>
<dbReference type="EMDB" id="EMD-11289"/>
<dbReference type="EMDB" id="EMD-11292"/>
<dbReference type="EMDB" id="EMD-11299"/>
<dbReference type="EMDB" id="EMD-12189"/>
<dbReference type="EMDB" id="EMD-13094"/>
<dbReference type="EMDB" id="EMD-14181"/>
<dbReference type="EMDB" id="EMD-16880"/>
<dbReference type="EMDB" id="EMD-16902"/>
<dbReference type="EMDB" id="EMD-16905"/>
<dbReference type="EMDB" id="EMD-16908"/>
<dbReference type="EMDB" id="EMD-18539"/>
<dbReference type="EMDB" id="EMD-18765"/>
<dbReference type="EMDB" id="EMD-35413"/>
<dbReference type="EMDB" id="EMD-35414"/>
<dbReference type="EMDB" id="EMD-36178"/>
<dbReference type="EMDB" id="EMD-36179"/>
<dbReference type="EMDB" id="EMD-36180"/>
<dbReference type="EMDB" id="EMD-36181"/>
<dbReference type="EMDB" id="EMD-38629"/>
<dbReference type="EMDB" id="EMD-3883"/>
<dbReference type="EMDB" id="EMD-4070"/>
<dbReference type="EMDB" id="EMD-42351"/>
<dbReference type="EMDB" id="EMD-51132"/>
<dbReference type="EMDB" id="EMD-9701"/>
<dbReference type="EMDB" id="EMD-9702"/>
<dbReference type="EMDB" id="EMD-9703"/>
<dbReference type="SMR" id="Q96L21"/>
<dbReference type="BioGRID" id="126711">
    <property type="interactions" value="117"/>
</dbReference>
<dbReference type="ComplexPortal" id="CPX-7664">
    <property type="entry name" value="60S cytosolic large ribosomal subunit, testis-specific variant"/>
</dbReference>
<dbReference type="FunCoup" id="Q96L21">
    <property type="interactions" value="447"/>
</dbReference>
<dbReference type="IntAct" id="Q96L21">
    <property type="interactions" value="18"/>
</dbReference>
<dbReference type="MINT" id="Q96L21"/>
<dbReference type="STRING" id="9606.ENSP00000298283"/>
<dbReference type="DrugBank" id="DB02494">
    <property type="generic name" value="(S)-3-phenyllactic acid"/>
</dbReference>
<dbReference type="DrugBank" id="DB07374">
    <property type="generic name" value="Anisomycin"/>
</dbReference>
<dbReference type="DrugBank" id="DB01421">
    <property type="generic name" value="Paromomycin"/>
</dbReference>
<dbReference type="DrugBank" id="DB08437">
    <property type="generic name" value="Puromycin"/>
</dbReference>
<dbReference type="iPTMnet" id="Q96L21"/>
<dbReference type="PhosphoSitePlus" id="Q96L21"/>
<dbReference type="SwissPalm" id="Q96L21"/>
<dbReference type="BioMuta" id="RPL10L"/>
<dbReference type="DMDM" id="57013008"/>
<dbReference type="jPOST" id="Q96L21"/>
<dbReference type="MassIVE" id="Q96L21"/>
<dbReference type="PaxDb" id="9606-ENSP00000298283"/>
<dbReference type="PeptideAtlas" id="Q96L21"/>
<dbReference type="ProteomicsDB" id="77142"/>
<dbReference type="Antibodypedia" id="23486">
    <property type="antibodies" value="139 antibodies from 23 providers"/>
</dbReference>
<dbReference type="DNASU" id="140801"/>
<dbReference type="Ensembl" id="ENST00000298283.5">
    <property type="protein sequence ID" value="ENSP00000298283.3"/>
    <property type="gene ID" value="ENSG00000165496.5"/>
</dbReference>
<dbReference type="GeneID" id="140801"/>
<dbReference type="KEGG" id="hsa:140801"/>
<dbReference type="MANE-Select" id="ENST00000298283.5">
    <property type="protein sequence ID" value="ENSP00000298283.3"/>
    <property type="RefSeq nucleotide sequence ID" value="NM_080746.3"/>
    <property type="RefSeq protein sequence ID" value="NP_542784.1"/>
</dbReference>
<dbReference type="UCSC" id="uc001wwg.5">
    <property type="organism name" value="human"/>
</dbReference>
<dbReference type="AGR" id="HGNC:17976"/>
<dbReference type="CTD" id="140801"/>
<dbReference type="DisGeNET" id="140801"/>
<dbReference type="GeneCards" id="RPL10L"/>
<dbReference type="HGNC" id="HGNC:17976">
    <property type="gene designation" value="RPL10L"/>
</dbReference>
<dbReference type="HPA" id="ENSG00000165496">
    <property type="expression patterns" value="Tissue enriched (testis)"/>
</dbReference>
<dbReference type="MalaCards" id="RPL10L"/>
<dbReference type="MIM" id="619655">
    <property type="type" value="gene"/>
</dbReference>
<dbReference type="MIM" id="619689">
    <property type="type" value="phenotype"/>
</dbReference>
<dbReference type="neXtProt" id="NX_Q96L21"/>
<dbReference type="OpenTargets" id="ENSG00000165496"/>
<dbReference type="Orphanet" id="399805">
    <property type="disease" value="Male infertility with azoospermia or oligozoospermia due to single gene mutation"/>
</dbReference>
<dbReference type="PharmGKB" id="PA34662"/>
<dbReference type="VEuPathDB" id="HostDB:ENSG00000165496"/>
<dbReference type="eggNOG" id="KOG0857">
    <property type="taxonomic scope" value="Eukaryota"/>
</dbReference>
<dbReference type="GeneTree" id="ENSGT00390000003897"/>
<dbReference type="HOGENOM" id="CLU_084051_0_0_1"/>
<dbReference type="InParanoid" id="Q96L21"/>
<dbReference type="OMA" id="GNHEIYR"/>
<dbReference type="OrthoDB" id="9507708at2759"/>
<dbReference type="PAN-GO" id="Q96L21">
    <property type="GO annotations" value="3 GO annotations based on evolutionary models"/>
</dbReference>
<dbReference type="PhylomeDB" id="Q96L21"/>
<dbReference type="TreeFam" id="TF300082"/>
<dbReference type="PathwayCommons" id="Q96L21"/>
<dbReference type="Reactome" id="R-HSA-156827">
    <property type="pathway name" value="L13a-mediated translational silencing of Ceruloplasmin expression"/>
</dbReference>
<dbReference type="Reactome" id="R-HSA-156902">
    <property type="pathway name" value="Peptide chain elongation"/>
</dbReference>
<dbReference type="Reactome" id="R-HSA-1799339">
    <property type="pathway name" value="SRP-dependent cotranslational protein targeting to membrane"/>
</dbReference>
<dbReference type="Reactome" id="R-HSA-192823">
    <property type="pathway name" value="Viral mRNA Translation"/>
</dbReference>
<dbReference type="Reactome" id="R-HSA-2408557">
    <property type="pathway name" value="Selenocysteine synthesis"/>
</dbReference>
<dbReference type="Reactome" id="R-HSA-6791226">
    <property type="pathway name" value="Major pathway of rRNA processing in the nucleolus and cytosol"/>
</dbReference>
<dbReference type="Reactome" id="R-HSA-72689">
    <property type="pathway name" value="Formation of a pool of free 40S subunits"/>
</dbReference>
<dbReference type="Reactome" id="R-HSA-72706">
    <property type="pathway name" value="GTP hydrolysis and joining of the 60S ribosomal subunit"/>
</dbReference>
<dbReference type="Reactome" id="R-HSA-72764">
    <property type="pathway name" value="Eukaryotic Translation Termination"/>
</dbReference>
<dbReference type="Reactome" id="R-HSA-9010553">
    <property type="pathway name" value="Regulation of expression of SLITs and ROBOs"/>
</dbReference>
<dbReference type="Reactome" id="R-HSA-9633012">
    <property type="pathway name" value="Response of EIF2AK4 (GCN2) to amino acid deficiency"/>
</dbReference>
<dbReference type="Reactome" id="R-HSA-975956">
    <property type="pathway name" value="Nonsense Mediated Decay (NMD) independent of the Exon Junction Complex (EJC)"/>
</dbReference>
<dbReference type="Reactome" id="R-HSA-975957">
    <property type="pathway name" value="Nonsense Mediated Decay (NMD) enhanced by the Exon Junction Complex (EJC)"/>
</dbReference>
<dbReference type="SignaLink" id="Q96L21"/>
<dbReference type="SIGNOR" id="Q96L21"/>
<dbReference type="BioGRID-ORCS" id="140801">
    <property type="hits" value="12 hits in 1143 CRISPR screens"/>
</dbReference>
<dbReference type="GeneWiki" id="RPL10L"/>
<dbReference type="GenomeRNAi" id="140801"/>
<dbReference type="Pharos" id="Q96L21">
    <property type="development level" value="Tbio"/>
</dbReference>
<dbReference type="PRO" id="PR:Q96L21"/>
<dbReference type="Proteomes" id="UP000005640">
    <property type="component" value="Chromosome 14"/>
</dbReference>
<dbReference type="RNAct" id="Q96L21">
    <property type="molecule type" value="protein"/>
</dbReference>
<dbReference type="Bgee" id="ENSG00000165496">
    <property type="expression patterns" value="Expressed in left testis and 103 other cell types or tissues"/>
</dbReference>
<dbReference type="GO" id="GO:0005829">
    <property type="term" value="C:cytosol"/>
    <property type="evidence" value="ECO:0000314"/>
    <property type="project" value="HPA"/>
</dbReference>
<dbReference type="GO" id="GO:0022625">
    <property type="term" value="C:cytosolic large ribosomal subunit"/>
    <property type="evidence" value="ECO:0000314"/>
    <property type="project" value="UniProtKB"/>
</dbReference>
<dbReference type="GO" id="GO:0005783">
    <property type="term" value="C:endoplasmic reticulum"/>
    <property type="evidence" value="ECO:0000314"/>
    <property type="project" value="HPA"/>
</dbReference>
<dbReference type="GO" id="GO:0016020">
    <property type="term" value="C:membrane"/>
    <property type="evidence" value="ECO:0007005"/>
    <property type="project" value="UniProtKB"/>
</dbReference>
<dbReference type="GO" id="GO:0005634">
    <property type="term" value="C:nucleus"/>
    <property type="evidence" value="ECO:0000314"/>
    <property type="project" value="LIFEdb"/>
</dbReference>
<dbReference type="GO" id="GO:0005840">
    <property type="term" value="C:ribosome"/>
    <property type="evidence" value="ECO:0000314"/>
    <property type="project" value="UniProtKB"/>
</dbReference>
<dbReference type="GO" id="GO:0003735">
    <property type="term" value="F:structural constituent of ribosome"/>
    <property type="evidence" value="ECO:0000314"/>
    <property type="project" value="UniProtKB"/>
</dbReference>
<dbReference type="GO" id="GO:0030154">
    <property type="term" value="P:cell differentiation"/>
    <property type="evidence" value="ECO:0007669"/>
    <property type="project" value="UniProtKB-KW"/>
</dbReference>
<dbReference type="GO" id="GO:0007141">
    <property type="term" value="P:male meiosis I"/>
    <property type="evidence" value="ECO:0000250"/>
    <property type="project" value="UniProtKB"/>
</dbReference>
<dbReference type="GO" id="GO:0000027">
    <property type="term" value="P:ribosomal large subunit assembly"/>
    <property type="evidence" value="ECO:0000250"/>
    <property type="project" value="UniProtKB"/>
</dbReference>
<dbReference type="GO" id="GO:0007283">
    <property type="term" value="P:spermatogenesis"/>
    <property type="evidence" value="ECO:0000315"/>
    <property type="project" value="UniProtKB"/>
</dbReference>
<dbReference type="GO" id="GO:0006412">
    <property type="term" value="P:translation"/>
    <property type="evidence" value="ECO:0000318"/>
    <property type="project" value="GO_Central"/>
</dbReference>
<dbReference type="CDD" id="cd01433">
    <property type="entry name" value="Ribosomal_L16_L10e"/>
    <property type="match status" value="1"/>
</dbReference>
<dbReference type="FunFam" id="3.30.60.300:FF:000001">
    <property type="entry name" value="60S ribosomal protein L10"/>
    <property type="match status" value="1"/>
</dbReference>
<dbReference type="FunFam" id="3.90.1170.10:FF:000002">
    <property type="entry name" value="60S ribosomal protein L10"/>
    <property type="match status" value="1"/>
</dbReference>
<dbReference type="Gene3D" id="3.30.60.300">
    <property type="match status" value="1"/>
</dbReference>
<dbReference type="Gene3D" id="3.90.1170.10">
    <property type="entry name" value="Ribosomal protein L10e/L16"/>
    <property type="match status" value="1"/>
</dbReference>
<dbReference type="InterPro" id="IPR047873">
    <property type="entry name" value="Ribosomal_uL16"/>
</dbReference>
<dbReference type="InterPro" id="IPR018255">
    <property type="entry name" value="Ribosomal_uL16_CS_euk_arc"/>
</dbReference>
<dbReference type="InterPro" id="IPR016180">
    <property type="entry name" value="Ribosomal_uL16_dom"/>
</dbReference>
<dbReference type="InterPro" id="IPR001197">
    <property type="entry name" value="Ribosomal_uL16_euk_arch"/>
</dbReference>
<dbReference type="InterPro" id="IPR036920">
    <property type="entry name" value="Ribosomal_uL16_sf"/>
</dbReference>
<dbReference type="NCBIfam" id="NF003239">
    <property type="entry name" value="PRK04199.1-4"/>
    <property type="match status" value="1"/>
</dbReference>
<dbReference type="NCBIfam" id="TIGR00279">
    <property type="entry name" value="uL16_euk_arch"/>
    <property type="match status" value="1"/>
</dbReference>
<dbReference type="PANTHER" id="PTHR11726">
    <property type="entry name" value="60S RIBOSOMAL PROTEIN L10"/>
    <property type="match status" value="1"/>
</dbReference>
<dbReference type="Pfam" id="PF00252">
    <property type="entry name" value="Ribosomal_L16"/>
    <property type="match status" value="1"/>
</dbReference>
<dbReference type="PIRSF" id="PIRSF005590">
    <property type="entry name" value="Ribosomal_L10"/>
    <property type="match status" value="1"/>
</dbReference>
<dbReference type="SUPFAM" id="SSF54686">
    <property type="entry name" value="Ribosomal protein L16p/L10e"/>
    <property type="match status" value="1"/>
</dbReference>
<dbReference type="PROSITE" id="PS01257">
    <property type="entry name" value="RIBOSOMAL_L10E"/>
    <property type="match status" value="1"/>
</dbReference>
<keyword id="KW-0002">3D-structure</keyword>
<keyword id="KW-0963">Cytoplasm</keyword>
<keyword id="KW-0221">Differentiation</keyword>
<keyword id="KW-0225">Disease variant</keyword>
<keyword id="KW-0469">Meiosis</keyword>
<keyword id="KW-1267">Proteomics identification</keyword>
<keyword id="KW-1185">Reference proteome</keyword>
<keyword id="KW-0687">Ribonucleoprotein</keyword>
<keyword id="KW-0689">Ribosomal protein</keyword>
<keyword id="KW-0744">Spermatogenesis</keyword>